<evidence type="ECO:0000255" key="1">
    <source>
        <dbReference type="HAMAP-Rule" id="MF_00299"/>
    </source>
</evidence>
<accession>Q2SQM5</accession>
<name>KPTA_HAHCH</name>
<feature type="chain" id="PRO_1000078982" description="Probable RNA 2'-phosphotransferase">
    <location>
        <begin position="1"/>
        <end position="186"/>
    </location>
</feature>
<comment type="function">
    <text evidence="1">Removes the 2'-phosphate from RNA via an intermediate in which the phosphate is ADP-ribosylated by NAD followed by a presumed transesterification to release the RNA and generate ADP-ribose 1''-2''-cyclic phosphate (APPR&gt;P). May function as an ADP-ribosylase.</text>
</comment>
<comment type="similarity">
    <text evidence="1">Belongs to the KptA/TPT1 family.</text>
</comment>
<gene>
    <name evidence="1" type="primary">kptA</name>
    <name type="ordered locus">HCH_00129</name>
</gene>
<keyword id="KW-0520">NAD</keyword>
<keyword id="KW-1185">Reference proteome</keyword>
<keyword id="KW-0808">Transferase</keyword>
<sequence length="186" mass="20380">MDKKLKSKSKFLSLVLRHQPELIQLPLDANGWADIEVLLAGAARQGVNISLQDVLEIVATNDKQRFALSGDKRRIRASQGHSIDVDLQLTPVTPPDELYHGSATRFTDAILATGLQPGQRRHVHLSADVETAHKVGSRHGKPVIFRIDAKALTLAGHAFYLSANQVWLTDAVPPQYLSLLDTSPQG</sequence>
<organism>
    <name type="scientific">Hahella chejuensis (strain KCTC 2396)</name>
    <dbReference type="NCBI Taxonomy" id="349521"/>
    <lineage>
        <taxon>Bacteria</taxon>
        <taxon>Pseudomonadati</taxon>
        <taxon>Pseudomonadota</taxon>
        <taxon>Gammaproteobacteria</taxon>
        <taxon>Oceanospirillales</taxon>
        <taxon>Hahellaceae</taxon>
        <taxon>Hahella</taxon>
    </lineage>
</organism>
<proteinExistence type="inferred from homology"/>
<dbReference type="EC" id="2.7.1.-" evidence="1"/>
<dbReference type="EMBL" id="CP000155">
    <property type="protein sequence ID" value="ABC27049.1"/>
    <property type="molecule type" value="Genomic_DNA"/>
</dbReference>
<dbReference type="RefSeq" id="WP_011394126.1">
    <property type="nucleotide sequence ID" value="NC_007645.1"/>
</dbReference>
<dbReference type="SMR" id="Q2SQM5"/>
<dbReference type="STRING" id="349521.HCH_00129"/>
<dbReference type="KEGG" id="hch:HCH_00129"/>
<dbReference type="eggNOG" id="COG1859">
    <property type="taxonomic scope" value="Bacteria"/>
</dbReference>
<dbReference type="HOGENOM" id="CLU_052998_4_0_6"/>
<dbReference type="OrthoDB" id="4537997at2"/>
<dbReference type="Proteomes" id="UP000000238">
    <property type="component" value="Chromosome"/>
</dbReference>
<dbReference type="GO" id="GO:0003950">
    <property type="term" value="F:NAD+ poly-ADP-ribosyltransferase activity"/>
    <property type="evidence" value="ECO:0007669"/>
    <property type="project" value="InterPro"/>
</dbReference>
<dbReference type="GO" id="GO:0000215">
    <property type="term" value="F:tRNA 2'-phosphotransferase activity"/>
    <property type="evidence" value="ECO:0007669"/>
    <property type="project" value="TreeGrafter"/>
</dbReference>
<dbReference type="GO" id="GO:0006388">
    <property type="term" value="P:tRNA splicing, via endonucleolytic cleavage and ligation"/>
    <property type="evidence" value="ECO:0007669"/>
    <property type="project" value="UniProtKB-UniRule"/>
</dbReference>
<dbReference type="Gene3D" id="3.20.170.30">
    <property type="match status" value="1"/>
</dbReference>
<dbReference type="Gene3D" id="1.10.10.970">
    <property type="entry name" value="RNA 2'-phosphotransferase, Tpt1/KptA family, N-terminal domain"/>
    <property type="match status" value="1"/>
</dbReference>
<dbReference type="HAMAP" id="MF_00299">
    <property type="entry name" value="KptA"/>
    <property type="match status" value="1"/>
</dbReference>
<dbReference type="InterPro" id="IPR002745">
    <property type="entry name" value="Ptrans_KptA/Tpt1"/>
</dbReference>
<dbReference type="InterPro" id="IPR042081">
    <property type="entry name" value="RNA_2'-PTrans_C"/>
</dbReference>
<dbReference type="InterPro" id="IPR022928">
    <property type="entry name" value="RNA_2'-PTrans_KptA"/>
</dbReference>
<dbReference type="InterPro" id="IPR042080">
    <property type="entry name" value="RNA_2'-PTrans_N"/>
</dbReference>
<dbReference type="NCBIfam" id="NF002014">
    <property type="entry name" value="PRK00819.1-4"/>
    <property type="match status" value="1"/>
</dbReference>
<dbReference type="PANTHER" id="PTHR12684">
    <property type="entry name" value="PUTATIVE PHOSPHOTRANSFERASE"/>
    <property type="match status" value="1"/>
</dbReference>
<dbReference type="PANTHER" id="PTHR12684:SF2">
    <property type="entry name" value="TRNA 2'-PHOSPHOTRANSFERASE 1"/>
    <property type="match status" value="1"/>
</dbReference>
<dbReference type="Pfam" id="PF01885">
    <property type="entry name" value="PTS_2-RNA"/>
    <property type="match status" value="1"/>
</dbReference>
<dbReference type="SUPFAM" id="SSF56399">
    <property type="entry name" value="ADP-ribosylation"/>
    <property type="match status" value="1"/>
</dbReference>
<reference key="1">
    <citation type="journal article" date="2005" name="Nucleic Acids Res.">
        <title>Genomic blueprint of Hahella chejuensis, a marine microbe producing an algicidal agent.</title>
        <authorList>
            <person name="Jeong H."/>
            <person name="Yim J.H."/>
            <person name="Lee C."/>
            <person name="Choi S.-H."/>
            <person name="Park Y.K."/>
            <person name="Yoon S.H."/>
            <person name="Hur C.-G."/>
            <person name="Kang H.-Y."/>
            <person name="Kim D."/>
            <person name="Lee H.H."/>
            <person name="Park K.H."/>
            <person name="Park S.-H."/>
            <person name="Park H.-S."/>
            <person name="Lee H.K."/>
            <person name="Oh T.K."/>
            <person name="Kim J.F."/>
        </authorList>
    </citation>
    <scope>NUCLEOTIDE SEQUENCE [LARGE SCALE GENOMIC DNA]</scope>
    <source>
        <strain>KCTC 2396</strain>
    </source>
</reference>
<protein>
    <recommendedName>
        <fullName evidence="1">Probable RNA 2'-phosphotransferase</fullName>
        <ecNumber evidence="1">2.7.1.-</ecNumber>
    </recommendedName>
</protein>